<sequence length="238" mass="26964">MTHVEVVATIAPQLSIEETLIQKINHRIDAIDVLELRIDQIENVTVDQVAEMITKLKVMQDSFKLLVTYRTKLQGGYGQFINDLYLNLISDLANINGIDMIDIEWQADIDIEKHQRIIKHLQQYNKEVVISHHNFESTPPLDELQFIFFKMQKFNPEYVKLAVMPHNKNDVLNLLQAMSTFSDTMDCKVVGISMSKLGLISRTAQGVFGGALTYGCIGEPQAPGQIDVTDLKAQVTLY</sequence>
<evidence type="ECO:0000255" key="1">
    <source>
        <dbReference type="HAMAP-Rule" id="MF_00214"/>
    </source>
</evidence>
<comment type="function">
    <text evidence="1">Involved in the third step of the chorismate pathway, which leads to the biosynthesis of aromatic amino acids. Catalyzes the cis-dehydration of 3-dehydroquinate (DHQ) and introduces the first double bond of the aromatic ring to yield 3-dehydroshikimate.</text>
</comment>
<comment type="catalytic activity">
    <reaction evidence="1">
        <text>3-dehydroquinate = 3-dehydroshikimate + H2O</text>
        <dbReference type="Rhea" id="RHEA:21096"/>
        <dbReference type="ChEBI" id="CHEBI:15377"/>
        <dbReference type="ChEBI" id="CHEBI:16630"/>
        <dbReference type="ChEBI" id="CHEBI:32364"/>
        <dbReference type="EC" id="4.2.1.10"/>
    </reaction>
</comment>
<comment type="pathway">
    <text evidence="1">Metabolic intermediate biosynthesis; chorismate biosynthesis; chorismate from D-erythrose 4-phosphate and phosphoenolpyruvate: step 3/7.</text>
</comment>
<comment type="subunit">
    <text evidence="1">Homodimer.</text>
</comment>
<comment type="similarity">
    <text evidence="1">Belongs to the type-I 3-dehydroquinase family.</text>
</comment>
<name>AROD_STAAM</name>
<organism>
    <name type="scientific">Staphylococcus aureus (strain Mu50 / ATCC 700699)</name>
    <dbReference type="NCBI Taxonomy" id="158878"/>
    <lineage>
        <taxon>Bacteria</taxon>
        <taxon>Bacillati</taxon>
        <taxon>Bacillota</taxon>
        <taxon>Bacilli</taxon>
        <taxon>Bacillales</taxon>
        <taxon>Staphylococcaceae</taxon>
        <taxon>Staphylococcus</taxon>
    </lineage>
</organism>
<keyword id="KW-0028">Amino-acid biosynthesis</keyword>
<keyword id="KW-0057">Aromatic amino acid biosynthesis</keyword>
<keyword id="KW-0456">Lyase</keyword>
<keyword id="KW-0704">Schiff base</keyword>
<dbReference type="EC" id="4.2.1.10" evidence="1"/>
<dbReference type="EMBL" id="BA000017">
    <property type="protein sequence ID" value="BAB56991.1"/>
    <property type="molecule type" value="Genomic_DNA"/>
</dbReference>
<dbReference type="RefSeq" id="WP_000150011.1">
    <property type="nucleotide sequence ID" value="NC_002758.2"/>
</dbReference>
<dbReference type="SMR" id="P63586"/>
<dbReference type="KEGG" id="sav:SAV0829"/>
<dbReference type="HOGENOM" id="CLU_064444_2_1_9"/>
<dbReference type="PhylomeDB" id="P63586"/>
<dbReference type="UniPathway" id="UPA00053">
    <property type="reaction ID" value="UER00086"/>
</dbReference>
<dbReference type="Proteomes" id="UP000002481">
    <property type="component" value="Chromosome"/>
</dbReference>
<dbReference type="GO" id="GO:0003855">
    <property type="term" value="F:3-dehydroquinate dehydratase activity"/>
    <property type="evidence" value="ECO:0007669"/>
    <property type="project" value="UniProtKB-UniRule"/>
</dbReference>
<dbReference type="GO" id="GO:0046279">
    <property type="term" value="P:3,4-dihydroxybenzoate biosynthetic process"/>
    <property type="evidence" value="ECO:0007669"/>
    <property type="project" value="TreeGrafter"/>
</dbReference>
<dbReference type="GO" id="GO:0008652">
    <property type="term" value="P:amino acid biosynthetic process"/>
    <property type="evidence" value="ECO:0007669"/>
    <property type="project" value="UniProtKB-KW"/>
</dbReference>
<dbReference type="GO" id="GO:0009073">
    <property type="term" value="P:aromatic amino acid family biosynthetic process"/>
    <property type="evidence" value="ECO:0007669"/>
    <property type="project" value="UniProtKB-KW"/>
</dbReference>
<dbReference type="GO" id="GO:0009423">
    <property type="term" value="P:chorismate biosynthetic process"/>
    <property type="evidence" value="ECO:0007669"/>
    <property type="project" value="UniProtKB-UniRule"/>
</dbReference>
<dbReference type="CDD" id="cd00502">
    <property type="entry name" value="DHQase_I"/>
    <property type="match status" value="1"/>
</dbReference>
<dbReference type="FunFam" id="3.20.20.70:FF:000216">
    <property type="entry name" value="3-dehydroquinate dehydratase"/>
    <property type="match status" value="1"/>
</dbReference>
<dbReference type="Gene3D" id="3.20.20.70">
    <property type="entry name" value="Aldolase class I"/>
    <property type="match status" value="1"/>
</dbReference>
<dbReference type="HAMAP" id="MF_00214">
    <property type="entry name" value="AroD"/>
    <property type="match status" value="1"/>
</dbReference>
<dbReference type="InterPro" id="IPR013785">
    <property type="entry name" value="Aldolase_TIM"/>
</dbReference>
<dbReference type="InterPro" id="IPR001381">
    <property type="entry name" value="DHquinase_I"/>
</dbReference>
<dbReference type="InterPro" id="IPR050146">
    <property type="entry name" value="Type-I_3-dehydroquinase"/>
</dbReference>
<dbReference type="NCBIfam" id="TIGR01093">
    <property type="entry name" value="aroD"/>
    <property type="match status" value="1"/>
</dbReference>
<dbReference type="PANTHER" id="PTHR43699">
    <property type="entry name" value="3-DEHYDROQUINATE DEHYDRATASE"/>
    <property type="match status" value="1"/>
</dbReference>
<dbReference type="PANTHER" id="PTHR43699:SF1">
    <property type="entry name" value="3-DEHYDROQUINATE DEHYDRATASE"/>
    <property type="match status" value="1"/>
</dbReference>
<dbReference type="Pfam" id="PF01487">
    <property type="entry name" value="DHquinase_I"/>
    <property type="match status" value="1"/>
</dbReference>
<dbReference type="SUPFAM" id="SSF51569">
    <property type="entry name" value="Aldolase"/>
    <property type="match status" value="1"/>
</dbReference>
<protein>
    <recommendedName>
        <fullName evidence="1">3-dehydroquinate dehydratase</fullName>
        <shortName evidence="1">3-dehydroquinase</shortName>
        <ecNumber evidence="1">4.2.1.10</ecNumber>
    </recommendedName>
    <alternativeName>
        <fullName evidence="1">Type I DHQase</fullName>
    </alternativeName>
    <alternativeName>
        <fullName evidence="1">Type I dehydroquinase</fullName>
        <shortName evidence="1">DHQ1</shortName>
    </alternativeName>
</protein>
<proteinExistence type="inferred from homology"/>
<accession>P63586</accession>
<accession>Q99VH7</accession>
<gene>
    <name evidence="1" type="primary">aroD</name>
    <name type="ordered locus">SAV0829</name>
</gene>
<feature type="chain" id="PRO_0000138809" description="3-dehydroquinate dehydratase">
    <location>
        <begin position="1"/>
        <end position="238"/>
    </location>
</feature>
<feature type="active site" description="Proton donor/acceptor" evidence="1">
    <location>
        <position position="133"/>
    </location>
</feature>
<feature type="active site" description="Schiff-base intermediate with substrate" evidence="1">
    <location>
        <position position="160"/>
    </location>
</feature>
<feature type="binding site" evidence="1">
    <location>
        <begin position="35"/>
        <end position="37"/>
    </location>
    <ligand>
        <name>3-dehydroquinate</name>
        <dbReference type="ChEBI" id="CHEBI:32364"/>
    </ligand>
</feature>
<feature type="binding site" evidence="1">
    <location>
        <position position="70"/>
    </location>
    <ligand>
        <name>3-dehydroquinate</name>
        <dbReference type="ChEBI" id="CHEBI:32364"/>
    </ligand>
</feature>
<feature type="binding site" evidence="1">
    <location>
        <position position="202"/>
    </location>
    <ligand>
        <name>3-dehydroquinate</name>
        <dbReference type="ChEBI" id="CHEBI:32364"/>
    </ligand>
</feature>
<feature type="binding site" evidence="1">
    <location>
        <position position="225"/>
    </location>
    <ligand>
        <name>3-dehydroquinate</name>
        <dbReference type="ChEBI" id="CHEBI:32364"/>
    </ligand>
</feature>
<reference key="1">
    <citation type="journal article" date="2001" name="Lancet">
        <title>Whole genome sequencing of meticillin-resistant Staphylococcus aureus.</title>
        <authorList>
            <person name="Kuroda M."/>
            <person name="Ohta T."/>
            <person name="Uchiyama I."/>
            <person name="Baba T."/>
            <person name="Yuzawa H."/>
            <person name="Kobayashi I."/>
            <person name="Cui L."/>
            <person name="Oguchi A."/>
            <person name="Aoki K."/>
            <person name="Nagai Y."/>
            <person name="Lian J.-Q."/>
            <person name="Ito T."/>
            <person name="Kanamori M."/>
            <person name="Matsumaru H."/>
            <person name="Maruyama A."/>
            <person name="Murakami H."/>
            <person name="Hosoyama A."/>
            <person name="Mizutani-Ui Y."/>
            <person name="Takahashi N.K."/>
            <person name="Sawano T."/>
            <person name="Inoue R."/>
            <person name="Kaito C."/>
            <person name="Sekimizu K."/>
            <person name="Hirakawa H."/>
            <person name="Kuhara S."/>
            <person name="Goto S."/>
            <person name="Yabuzaki J."/>
            <person name="Kanehisa M."/>
            <person name="Yamashita A."/>
            <person name="Oshima K."/>
            <person name="Furuya K."/>
            <person name="Yoshino C."/>
            <person name="Shiba T."/>
            <person name="Hattori M."/>
            <person name="Ogasawara N."/>
            <person name="Hayashi H."/>
            <person name="Hiramatsu K."/>
        </authorList>
    </citation>
    <scope>NUCLEOTIDE SEQUENCE [LARGE SCALE GENOMIC DNA]</scope>
    <source>
        <strain>Mu50 / ATCC 700699</strain>
    </source>
</reference>